<keyword id="KW-0963">Cytoplasm</keyword>
<keyword id="KW-0269">Exonuclease</keyword>
<keyword id="KW-0378">Hydrolase</keyword>
<keyword id="KW-0540">Nuclease</keyword>
<keyword id="KW-1185">Reference proteome</keyword>
<evidence type="ECO:0000255" key="1">
    <source>
        <dbReference type="HAMAP-Rule" id="MF_00337"/>
    </source>
</evidence>
<evidence type="ECO:0000305" key="2"/>
<protein>
    <recommendedName>
        <fullName evidence="1">Exodeoxyribonuclease 7 small subunit</fullName>
        <ecNumber evidence="1">3.1.11.6</ecNumber>
    </recommendedName>
    <alternativeName>
        <fullName evidence="1">Exodeoxyribonuclease VII small subunit</fullName>
        <shortName evidence="1">Exonuclease VII small subunit</shortName>
    </alternativeName>
</protein>
<sequence>MAKKSLNETSPVARFEQSLEELEQLVQKMEVGDLSLEQSLTAYERGIGLYRDCQQALEQAELRVRLLTDPARPELAQAFEPPSLDG</sequence>
<gene>
    <name evidence="1" type="primary">xseB</name>
    <name type="ordered locus">XOO3298</name>
</gene>
<organism>
    <name type="scientific">Xanthomonas oryzae pv. oryzae (strain KACC10331 / KXO85)</name>
    <dbReference type="NCBI Taxonomy" id="291331"/>
    <lineage>
        <taxon>Bacteria</taxon>
        <taxon>Pseudomonadati</taxon>
        <taxon>Pseudomonadota</taxon>
        <taxon>Gammaproteobacteria</taxon>
        <taxon>Lysobacterales</taxon>
        <taxon>Lysobacteraceae</taxon>
        <taxon>Xanthomonas</taxon>
    </lineage>
</organism>
<comment type="function">
    <text evidence="1">Bidirectionally degrades single-stranded DNA into large acid-insoluble oligonucleotides, which are then degraded further into small acid-soluble oligonucleotides.</text>
</comment>
<comment type="catalytic activity">
    <reaction evidence="1">
        <text>Exonucleolytic cleavage in either 5'- to 3'- or 3'- to 5'-direction to yield nucleoside 5'-phosphates.</text>
        <dbReference type="EC" id="3.1.11.6"/>
    </reaction>
</comment>
<comment type="subunit">
    <text evidence="1">Heterooligomer composed of large and small subunits.</text>
</comment>
<comment type="subcellular location">
    <subcellularLocation>
        <location evidence="1">Cytoplasm</location>
    </subcellularLocation>
</comment>
<comment type="similarity">
    <text evidence="1">Belongs to the XseB family.</text>
</comment>
<comment type="sequence caution" evidence="2">
    <conflict type="erroneous initiation">
        <sequence resource="EMBL-CDS" id="AAW76552"/>
    </conflict>
</comment>
<proteinExistence type="inferred from homology"/>
<accession>Q5GXL9</accession>
<feature type="chain" id="PRO_0000207035" description="Exodeoxyribonuclease 7 small subunit">
    <location>
        <begin position="1"/>
        <end position="86"/>
    </location>
</feature>
<reference key="1">
    <citation type="journal article" date="2005" name="Nucleic Acids Res.">
        <title>The genome sequence of Xanthomonas oryzae pathovar oryzae KACC10331, the bacterial blight pathogen of rice.</title>
        <authorList>
            <person name="Lee B.-M."/>
            <person name="Park Y.-J."/>
            <person name="Park D.-S."/>
            <person name="Kang H.-W."/>
            <person name="Kim J.-G."/>
            <person name="Song E.-S."/>
            <person name="Park I.-C."/>
            <person name="Yoon U.-H."/>
            <person name="Hahn J.-H."/>
            <person name="Koo B.-S."/>
            <person name="Lee G.-B."/>
            <person name="Kim H."/>
            <person name="Park H.-S."/>
            <person name="Yoon K.-O."/>
            <person name="Kim J.-H."/>
            <person name="Jung C.-H."/>
            <person name="Koh N.-H."/>
            <person name="Seo J.-S."/>
            <person name="Go S.-J."/>
        </authorList>
    </citation>
    <scope>NUCLEOTIDE SEQUENCE [LARGE SCALE GENOMIC DNA]</scope>
    <source>
        <strain>KACC10331 / KXO85</strain>
    </source>
</reference>
<dbReference type="EC" id="3.1.11.6" evidence="1"/>
<dbReference type="EMBL" id="AE013598">
    <property type="protein sequence ID" value="AAW76552.1"/>
    <property type="status" value="ALT_INIT"/>
    <property type="molecule type" value="Genomic_DNA"/>
</dbReference>
<dbReference type="SMR" id="Q5GXL9"/>
<dbReference type="STRING" id="291331.XOO3298"/>
<dbReference type="KEGG" id="xoo:XOO3298"/>
<dbReference type="HOGENOM" id="CLU_145918_3_3_6"/>
<dbReference type="Proteomes" id="UP000006735">
    <property type="component" value="Chromosome"/>
</dbReference>
<dbReference type="GO" id="GO:0005829">
    <property type="term" value="C:cytosol"/>
    <property type="evidence" value="ECO:0007669"/>
    <property type="project" value="TreeGrafter"/>
</dbReference>
<dbReference type="GO" id="GO:0009318">
    <property type="term" value="C:exodeoxyribonuclease VII complex"/>
    <property type="evidence" value="ECO:0007669"/>
    <property type="project" value="InterPro"/>
</dbReference>
<dbReference type="GO" id="GO:0008855">
    <property type="term" value="F:exodeoxyribonuclease VII activity"/>
    <property type="evidence" value="ECO:0007669"/>
    <property type="project" value="UniProtKB-UniRule"/>
</dbReference>
<dbReference type="GO" id="GO:0006308">
    <property type="term" value="P:DNA catabolic process"/>
    <property type="evidence" value="ECO:0007669"/>
    <property type="project" value="UniProtKB-UniRule"/>
</dbReference>
<dbReference type="FunFam" id="1.10.287.1040:FF:000005">
    <property type="entry name" value="Exodeoxyribonuclease 7 small subunit"/>
    <property type="match status" value="1"/>
</dbReference>
<dbReference type="Gene3D" id="1.10.287.1040">
    <property type="entry name" value="Exonuclease VII, small subunit"/>
    <property type="match status" value="1"/>
</dbReference>
<dbReference type="HAMAP" id="MF_00337">
    <property type="entry name" value="Exonuc_7_S"/>
    <property type="match status" value="1"/>
</dbReference>
<dbReference type="InterPro" id="IPR003761">
    <property type="entry name" value="Exonuc_VII_S"/>
</dbReference>
<dbReference type="InterPro" id="IPR037004">
    <property type="entry name" value="Exonuc_VII_ssu_sf"/>
</dbReference>
<dbReference type="NCBIfam" id="NF002140">
    <property type="entry name" value="PRK00977.1-4"/>
    <property type="match status" value="1"/>
</dbReference>
<dbReference type="NCBIfam" id="TIGR01280">
    <property type="entry name" value="xseB"/>
    <property type="match status" value="1"/>
</dbReference>
<dbReference type="PANTHER" id="PTHR34137">
    <property type="entry name" value="EXODEOXYRIBONUCLEASE 7 SMALL SUBUNIT"/>
    <property type="match status" value="1"/>
</dbReference>
<dbReference type="PANTHER" id="PTHR34137:SF1">
    <property type="entry name" value="EXODEOXYRIBONUCLEASE 7 SMALL SUBUNIT"/>
    <property type="match status" value="1"/>
</dbReference>
<dbReference type="Pfam" id="PF02609">
    <property type="entry name" value="Exonuc_VII_S"/>
    <property type="match status" value="1"/>
</dbReference>
<dbReference type="SUPFAM" id="SSF116842">
    <property type="entry name" value="XseB-like"/>
    <property type="match status" value="1"/>
</dbReference>
<name>EX7S_XANOR</name>